<geneLocation type="chloroplast"/>
<dbReference type="EMBL" id="AP009373">
    <property type="protein sequence ID" value="BAF50396.1"/>
    <property type="molecule type" value="Genomic_DNA"/>
</dbReference>
<dbReference type="RefSeq" id="YP_001123572.1">
    <property type="nucleotide sequence ID" value="NC_009272.1"/>
</dbReference>
<dbReference type="SMR" id="A4QL41"/>
<dbReference type="GeneID" id="4964798"/>
<dbReference type="GO" id="GO:0009507">
    <property type="term" value="C:chloroplast"/>
    <property type="evidence" value="ECO:0007669"/>
    <property type="project" value="UniProtKB-SubCell"/>
</dbReference>
<dbReference type="GO" id="GO:0005763">
    <property type="term" value="C:mitochondrial small ribosomal subunit"/>
    <property type="evidence" value="ECO:0007669"/>
    <property type="project" value="TreeGrafter"/>
</dbReference>
<dbReference type="GO" id="GO:0070181">
    <property type="term" value="F:small ribosomal subunit rRNA binding"/>
    <property type="evidence" value="ECO:0007669"/>
    <property type="project" value="TreeGrafter"/>
</dbReference>
<dbReference type="GO" id="GO:0003735">
    <property type="term" value="F:structural constituent of ribosome"/>
    <property type="evidence" value="ECO:0007669"/>
    <property type="project" value="InterPro"/>
</dbReference>
<dbReference type="GO" id="GO:0006412">
    <property type="term" value="P:translation"/>
    <property type="evidence" value="ECO:0007669"/>
    <property type="project" value="UniProtKB-UniRule"/>
</dbReference>
<dbReference type="FunFam" id="4.10.640.10:FF:000002">
    <property type="entry name" value="30S ribosomal protein S18, chloroplastic"/>
    <property type="match status" value="1"/>
</dbReference>
<dbReference type="Gene3D" id="4.10.640.10">
    <property type="entry name" value="Ribosomal protein S18"/>
    <property type="match status" value="1"/>
</dbReference>
<dbReference type="HAMAP" id="MF_00270">
    <property type="entry name" value="Ribosomal_bS18"/>
    <property type="match status" value="1"/>
</dbReference>
<dbReference type="InterPro" id="IPR001648">
    <property type="entry name" value="Ribosomal_bS18"/>
</dbReference>
<dbReference type="InterPro" id="IPR018275">
    <property type="entry name" value="Ribosomal_bS18_CS"/>
</dbReference>
<dbReference type="InterPro" id="IPR036870">
    <property type="entry name" value="Ribosomal_bS18_sf"/>
</dbReference>
<dbReference type="NCBIfam" id="TIGR00165">
    <property type="entry name" value="S18"/>
    <property type="match status" value="1"/>
</dbReference>
<dbReference type="PANTHER" id="PTHR13479">
    <property type="entry name" value="30S RIBOSOMAL PROTEIN S18"/>
    <property type="match status" value="1"/>
</dbReference>
<dbReference type="PANTHER" id="PTHR13479:SF40">
    <property type="entry name" value="SMALL RIBOSOMAL SUBUNIT PROTEIN BS18M"/>
    <property type="match status" value="1"/>
</dbReference>
<dbReference type="Pfam" id="PF01084">
    <property type="entry name" value="Ribosomal_S18"/>
    <property type="match status" value="1"/>
</dbReference>
<dbReference type="PRINTS" id="PR00974">
    <property type="entry name" value="RIBOSOMALS18"/>
</dbReference>
<dbReference type="SUPFAM" id="SSF46911">
    <property type="entry name" value="Ribosomal protein S18"/>
    <property type="match status" value="1"/>
</dbReference>
<dbReference type="PROSITE" id="PS00057">
    <property type="entry name" value="RIBOSOMAL_S18"/>
    <property type="match status" value="1"/>
</dbReference>
<comment type="subunit">
    <text evidence="1">Part of the 30S ribosomal subunit.</text>
</comment>
<comment type="subcellular location">
    <subcellularLocation>
        <location>Plastid</location>
        <location>Chloroplast</location>
    </subcellularLocation>
</comment>
<comment type="similarity">
    <text evidence="1">Belongs to the bacterial ribosomal protein bS18 family.</text>
</comment>
<reference key="1">
    <citation type="submission" date="2007-03" db="EMBL/GenBank/DDBJ databases">
        <title>Sequencing analysis of Draba nemoroza chloroplast DNA.</title>
        <authorList>
            <person name="Hosouchi T."/>
            <person name="Tsuruoka H."/>
            <person name="Kotani H."/>
        </authorList>
    </citation>
    <scope>NUCLEOTIDE SEQUENCE [LARGE SCALE GENOMIC DNA]</scope>
</reference>
<name>RR18_DRANE</name>
<proteinExistence type="inferred from homology"/>
<accession>A4QL41</accession>
<protein>
    <recommendedName>
        <fullName evidence="1">Small ribosomal subunit protein bS18c</fullName>
    </recommendedName>
    <alternativeName>
        <fullName evidence="3">30S ribosomal protein S18, chloroplastic</fullName>
    </alternativeName>
</protein>
<feature type="chain" id="PRO_0000345584" description="Small ribosomal subunit protein bS18c">
    <location>
        <begin position="1"/>
        <end position="101"/>
    </location>
</feature>
<feature type="region of interest" description="Disordered" evidence="2">
    <location>
        <begin position="1"/>
        <end position="23"/>
    </location>
</feature>
<feature type="compositionally biased region" description="Basic residues" evidence="2">
    <location>
        <begin position="1"/>
        <end position="19"/>
    </location>
</feature>
<gene>
    <name evidence="1" type="primary">rps18</name>
</gene>
<evidence type="ECO:0000255" key="1">
    <source>
        <dbReference type="HAMAP-Rule" id="MF_00270"/>
    </source>
</evidence>
<evidence type="ECO:0000256" key="2">
    <source>
        <dbReference type="SAM" id="MobiDB-lite"/>
    </source>
</evidence>
<evidence type="ECO:0000305" key="3"/>
<organism>
    <name type="scientific">Draba nemorosa</name>
    <name type="common">Woodland whitlowgrass</name>
    <dbReference type="NCBI Taxonomy" id="171822"/>
    <lineage>
        <taxon>Eukaryota</taxon>
        <taxon>Viridiplantae</taxon>
        <taxon>Streptophyta</taxon>
        <taxon>Embryophyta</taxon>
        <taxon>Tracheophyta</taxon>
        <taxon>Spermatophyta</taxon>
        <taxon>Magnoliopsida</taxon>
        <taxon>eudicotyledons</taxon>
        <taxon>Gunneridae</taxon>
        <taxon>Pentapetalae</taxon>
        <taxon>rosids</taxon>
        <taxon>malvids</taxon>
        <taxon>Brassicales</taxon>
        <taxon>Brassicaceae</taxon>
        <taxon>Arabideae</taxon>
        <taxon>Draba</taxon>
    </lineage>
</organism>
<keyword id="KW-0150">Chloroplast</keyword>
<keyword id="KW-0934">Plastid</keyword>
<keyword id="KW-0687">Ribonucleoprotein</keyword>
<keyword id="KW-0689">Ribosomal protein</keyword>
<keyword id="KW-0694">RNA-binding</keyword>
<keyword id="KW-0699">rRNA-binding</keyword>
<sequence>MNKSKRPFTKSKRSFRRRLPPIQSGDRIDYRNMSLISRFISEQGKILSRRVNRVTLKQQRLITIAIKQARILSLLPFLNNQKQFERSESTPRTTSLRTRKK</sequence>